<gene>
    <name type="primary">SIRT2</name>
    <name type="ORF">QtsA-13614</name>
</gene>
<feature type="initiator methionine" description="Removed" evidence="2">
    <location>
        <position position="1"/>
    </location>
</feature>
<feature type="chain" id="PRO_0000244535" description="NAD-dependent protein deacetylase sirtuin-2">
    <location>
        <begin position="2"/>
        <end position="389"/>
    </location>
</feature>
<feature type="domain" description="Deacetylase sirtuin-type" evidence="4">
    <location>
        <begin position="57"/>
        <end position="338"/>
    </location>
</feature>
<feature type="region of interest" description="Disordered" evidence="5">
    <location>
        <begin position="1"/>
        <end position="34"/>
    </location>
</feature>
<feature type="region of interest" description="Disordered" evidence="5">
    <location>
        <begin position="350"/>
        <end position="389"/>
    </location>
</feature>
<feature type="compositionally biased region" description="Basic and acidic residues" evidence="5">
    <location>
        <begin position="378"/>
        <end position="389"/>
    </location>
</feature>
<feature type="active site" description="Proton acceptor" evidence="4">
    <location>
        <position position="187"/>
    </location>
</feature>
<feature type="binding site" evidence="2">
    <location>
        <begin position="85"/>
        <end position="89"/>
    </location>
    <ligand>
        <name>NAD(+)</name>
        <dbReference type="ChEBI" id="CHEBI:57540"/>
    </ligand>
</feature>
<feature type="binding site" evidence="2">
    <location>
        <begin position="95"/>
        <end position="97"/>
    </location>
    <ligand>
        <name>NAD(+)</name>
        <dbReference type="ChEBI" id="CHEBI:57540"/>
    </ligand>
</feature>
<feature type="binding site" evidence="2">
    <location>
        <begin position="167"/>
        <end position="170"/>
    </location>
    <ligand>
        <name>NAD(+)</name>
        <dbReference type="ChEBI" id="CHEBI:57540"/>
    </ligand>
</feature>
<feature type="binding site" evidence="4">
    <location>
        <position position="195"/>
    </location>
    <ligand>
        <name>Zn(2+)</name>
        <dbReference type="ChEBI" id="CHEBI:29105"/>
    </ligand>
</feature>
<feature type="binding site" evidence="4">
    <location>
        <position position="200"/>
    </location>
    <ligand>
        <name>Zn(2+)</name>
        <dbReference type="ChEBI" id="CHEBI:29105"/>
    </ligand>
</feature>
<feature type="binding site" evidence="4">
    <location>
        <position position="221"/>
    </location>
    <ligand>
        <name>Zn(2+)</name>
        <dbReference type="ChEBI" id="CHEBI:29105"/>
    </ligand>
</feature>
<feature type="binding site" evidence="4">
    <location>
        <position position="224"/>
    </location>
    <ligand>
        <name>Zn(2+)</name>
        <dbReference type="ChEBI" id="CHEBI:29105"/>
    </ligand>
</feature>
<feature type="binding site" evidence="2">
    <location>
        <begin position="262"/>
        <end position="263"/>
    </location>
    <ligand>
        <name>NAD(+)</name>
        <dbReference type="ChEBI" id="CHEBI:57540"/>
    </ligand>
</feature>
<feature type="binding site" evidence="2">
    <location>
        <begin position="286"/>
        <end position="288"/>
    </location>
    <ligand>
        <name>NAD(+)</name>
        <dbReference type="ChEBI" id="CHEBI:57540"/>
    </ligand>
</feature>
<feature type="binding site" evidence="2">
    <location>
        <position position="324"/>
    </location>
    <ligand>
        <name>NAD(+)</name>
        <dbReference type="ChEBI" id="CHEBI:57540"/>
    </ligand>
</feature>
<feature type="modified residue" description="N-acetylalanine" evidence="2">
    <location>
        <position position="2"/>
    </location>
</feature>
<feature type="modified residue" description="Phosphoserine" evidence="2">
    <location>
        <position position="23"/>
    </location>
</feature>
<feature type="modified residue" description="Phosphoserine" evidence="2">
    <location>
        <position position="25"/>
    </location>
</feature>
<feature type="modified residue" description="Phosphoserine" evidence="2">
    <location>
        <position position="27"/>
    </location>
</feature>
<feature type="modified residue" description="Phosphoserine" evidence="1">
    <location>
        <position position="53"/>
    </location>
</feature>
<feature type="modified residue" description="Phosphoserine" evidence="1">
    <location>
        <position position="100"/>
    </location>
</feature>
<feature type="modified residue" description="Phosphoserine" evidence="1">
    <location>
        <position position="207"/>
    </location>
</feature>
<feature type="modified residue" description="Phosphoserine" evidence="2">
    <location>
        <position position="368"/>
    </location>
</feature>
<feature type="modified residue" description="Phosphoserine" evidence="2">
    <location>
        <position position="372"/>
    </location>
</feature>
<organism>
    <name type="scientific">Macaca fascicularis</name>
    <name type="common">Crab-eating macaque</name>
    <name type="synonym">Cynomolgus monkey</name>
    <dbReference type="NCBI Taxonomy" id="9541"/>
    <lineage>
        <taxon>Eukaryota</taxon>
        <taxon>Metazoa</taxon>
        <taxon>Chordata</taxon>
        <taxon>Craniata</taxon>
        <taxon>Vertebrata</taxon>
        <taxon>Euteleostomi</taxon>
        <taxon>Mammalia</taxon>
        <taxon>Eutheria</taxon>
        <taxon>Euarchontoglires</taxon>
        <taxon>Primates</taxon>
        <taxon>Haplorrhini</taxon>
        <taxon>Catarrhini</taxon>
        <taxon>Cercopithecidae</taxon>
        <taxon>Cercopithecinae</taxon>
        <taxon>Macaca</taxon>
    </lineage>
</organism>
<keyword id="KW-0007">Acetylation</keyword>
<keyword id="KW-0131">Cell cycle</keyword>
<keyword id="KW-0132">Cell division</keyword>
<keyword id="KW-1003">Cell membrane</keyword>
<keyword id="KW-0966">Cell projection</keyword>
<keyword id="KW-0158">Chromosome</keyword>
<keyword id="KW-0963">Cytoplasm</keyword>
<keyword id="KW-0206">Cytoskeleton</keyword>
<keyword id="KW-0472">Membrane</keyword>
<keyword id="KW-0479">Metal-binding</keyword>
<keyword id="KW-0493">Microtubule</keyword>
<keyword id="KW-0498">Mitosis</keyword>
<keyword id="KW-0520">NAD</keyword>
<keyword id="KW-0539">Nucleus</keyword>
<keyword id="KW-0597">Phosphoprotein</keyword>
<keyword id="KW-1185">Reference proteome</keyword>
<keyword id="KW-0808">Transferase</keyword>
<keyword id="KW-0832">Ubl conjugation</keyword>
<keyword id="KW-0862">Zinc</keyword>
<evidence type="ECO:0000250" key="1">
    <source>
        <dbReference type="UniProtKB" id="Q5RJQ4"/>
    </source>
</evidence>
<evidence type="ECO:0000250" key="2">
    <source>
        <dbReference type="UniProtKB" id="Q8IXJ6"/>
    </source>
</evidence>
<evidence type="ECO:0000250" key="3">
    <source>
        <dbReference type="UniProtKB" id="Q8VDQ8"/>
    </source>
</evidence>
<evidence type="ECO:0000255" key="4">
    <source>
        <dbReference type="PROSITE-ProRule" id="PRU00236"/>
    </source>
</evidence>
<evidence type="ECO:0000256" key="5">
    <source>
        <dbReference type="SAM" id="MobiDB-lite"/>
    </source>
</evidence>
<evidence type="ECO:0000305" key="6"/>
<dbReference type="EC" id="2.3.1.286" evidence="2 4"/>
<dbReference type="EC" id="2.3.1.-" evidence="2"/>
<dbReference type="EMBL" id="AB168626">
    <property type="protein sequence ID" value="BAE00738.1"/>
    <property type="molecule type" value="mRNA"/>
</dbReference>
<dbReference type="SMR" id="Q4R834"/>
<dbReference type="STRING" id="9541.ENSMFAP00000023181"/>
<dbReference type="eggNOG" id="KOG2682">
    <property type="taxonomic scope" value="Eukaryota"/>
</dbReference>
<dbReference type="Proteomes" id="UP000233100">
    <property type="component" value="Unplaced"/>
</dbReference>
<dbReference type="GO" id="GO:0005814">
    <property type="term" value="C:centriole"/>
    <property type="evidence" value="ECO:0000250"/>
    <property type="project" value="UniProtKB"/>
</dbReference>
<dbReference type="GO" id="GO:0005813">
    <property type="term" value="C:centrosome"/>
    <property type="evidence" value="ECO:0000250"/>
    <property type="project" value="UniProtKB"/>
</dbReference>
<dbReference type="GO" id="GO:0005694">
    <property type="term" value="C:chromosome"/>
    <property type="evidence" value="ECO:0000250"/>
    <property type="project" value="UniProtKB"/>
</dbReference>
<dbReference type="GO" id="GO:0005737">
    <property type="term" value="C:cytoplasm"/>
    <property type="evidence" value="ECO:0000250"/>
    <property type="project" value="UniProtKB"/>
</dbReference>
<dbReference type="GO" id="GO:0005829">
    <property type="term" value="C:cytosol"/>
    <property type="evidence" value="ECO:0000250"/>
    <property type="project" value="UniProtKB"/>
</dbReference>
<dbReference type="GO" id="GO:0097386">
    <property type="term" value="C:glial cell projection"/>
    <property type="evidence" value="ECO:0000250"/>
    <property type="project" value="UniProtKB"/>
</dbReference>
<dbReference type="GO" id="GO:0030426">
    <property type="term" value="C:growth cone"/>
    <property type="evidence" value="ECO:0007669"/>
    <property type="project" value="UniProtKB-SubCell"/>
</dbReference>
<dbReference type="GO" id="GO:0000792">
    <property type="term" value="C:heterochromatin"/>
    <property type="evidence" value="ECO:0000250"/>
    <property type="project" value="UniProtKB"/>
</dbReference>
<dbReference type="GO" id="GO:0044224">
    <property type="term" value="C:juxtaparanode region of axon"/>
    <property type="evidence" value="ECO:0000250"/>
    <property type="project" value="UniProtKB"/>
</dbReference>
<dbReference type="GO" id="GO:0043219">
    <property type="term" value="C:lateral loop"/>
    <property type="evidence" value="ECO:0000250"/>
    <property type="project" value="UniProtKB"/>
</dbReference>
<dbReference type="GO" id="GO:0072687">
    <property type="term" value="C:meiotic spindle"/>
    <property type="evidence" value="ECO:0000250"/>
    <property type="project" value="UniProtKB"/>
</dbReference>
<dbReference type="GO" id="GO:0005874">
    <property type="term" value="C:microtubule"/>
    <property type="evidence" value="ECO:0007669"/>
    <property type="project" value="UniProtKB-KW"/>
</dbReference>
<dbReference type="GO" id="GO:0030496">
    <property type="term" value="C:midbody"/>
    <property type="evidence" value="ECO:0000250"/>
    <property type="project" value="UniProtKB"/>
</dbReference>
<dbReference type="GO" id="GO:0072686">
    <property type="term" value="C:mitotic spindle"/>
    <property type="evidence" value="ECO:0000250"/>
    <property type="project" value="UniProtKB"/>
</dbReference>
<dbReference type="GO" id="GO:0043209">
    <property type="term" value="C:myelin sheath"/>
    <property type="evidence" value="ECO:0000250"/>
    <property type="project" value="UniProtKB"/>
</dbReference>
<dbReference type="GO" id="GO:0005634">
    <property type="term" value="C:nucleus"/>
    <property type="evidence" value="ECO:0000250"/>
    <property type="project" value="UniProtKB"/>
</dbReference>
<dbReference type="GO" id="GO:0033010">
    <property type="term" value="C:paranodal junction"/>
    <property type="evidence" value="ECO:0000250"/>
    <property type="project" value="UniProtKB"/>
</dbReference>
<dbReference type="GO" id="GO:0033270">
    <property type="term" value="C:paranode region of axon"/>
    <property type="evidence" value="ECO:0000250"/>
    <property type="project" value="UniProtKB"/>
</dbReference>
<dbReference type="GO" id="GO:0043204">
    <property type="term" value="C:perikaryon"/>
    <property type="evidence" value="ECO:0000250"/>
    <property type="project" value="UniProtKB"/>
</dbReference>
<dbReference type="GO" id="GO:0048471">
    <property type="term" value="C:perinuclear region of cytoplasm"/>
    <property type="evidence" value="ECO:0000250"/>
    <property type="project" value="UniProtKB"/>
</dbReference>
<dbReference type="GO" id="GO:0005886">
    <property type="term" value="C:plasma membrane"/>
    <property type="evidence" value="ECO:0007669"/>
    <property type="project" value="UniProtKB-KW"/>
</dbReference>
<dbReference type="GO" id="GO:0043220">
    <property type="term" value="C:Schmidt-Lanterman incisure"/>
    <property type="evidence" value="ECO:0000250"/>
    <property type="project" value="UniProtKB"/>
</dbReference>
<dbReference type="GO" id="GO:0005819">
    <property type="term" value="C:spindle"/>
    <property type="evidence" value="ECO:0000250"/>
    <property type="project" value="UniProtKB"/>
</dbReference>
<dbReference type="GO" id="GO:0003682">
    <property type="term" value="F:chromatin binding"/>
    <property type="evidence" value="ECO:0000250"/>
    <property type="project" value="UniProtKB"/>
</dbReference>
<dbReference type="GO" id="GO:0004407">
    <property type="term" value="F:histone deacetylase activity"/>
    <property type="evidence" value="ECO:0000250"/>
    <property type="project" value="UniProtKB"/>
</dbReference>
<dbReference type="GO" id="GO:0046970">
    <property type="term" value="F:histone H4K16 deacetylase activity, NAD-dependent"/>
    <property type="evidence" value="ECO:0000250"/>
    <property type="project" value="UniProtKB"/>
</dbReference>
<dbReference type="GO" id="GO:0046872">
    <property type="term" value="F:metal ion binding"/>
    <property type="evidence" value="ECO:0007669"/>
    <property type="project" value="UniProtKB-KW"/>
</dbReference>
<dbReference type="GO" id="GO:0070403">
    <property type="term" value="F:NAD+ binding"/>
    <property type="evidence" value="ECO:0007669"/>
    <property type="project" value="InterPro"/>
</dbReference>
<dbReference type="GO" id="GO:0140773">
    <property type="term" value="F:NAD-dependent protein demyristoylase activity"/>
    <property type="evidence" value="ECO:0000250"/>
    <property type="project" value="UniProtKB"/>
</dbReference>
<dbReference type="GO" id="GO:0140774">
    <property type="term" value="F:NAD-dependent protein depalmitoylase activity"/>
    <property type="evidence" value="ECO:0000250"/>
    <property type="project" value="UniProtKB"/>
</dbReference>
<dbReference type="GO" id="GO:0034979">
    <property type="term" value="F:NAD-dependent protein lysine deacetylase activity"/>
    <property type="evidence" value="ECO:0000250"/>
    <property type="project" value="UniProtKB"/>
</dbReference>
<dbReference type="GO" id="GO:0033558">
    <property type="term" value="F:protein lysine deacetylase activity"/>
    <property type="evidence" value="ECO:0000250"/>
    <property type="project" value="UniProtKB"/>
</dbReference>
<dbReference type="GO" id="GO:0042903">
    <property type="term" value="F:tubulin deacetylase activity"/>
    <property type="evidence" value="ECO:0000250"/>
    <property type="project" value="UniProtKB"/>
</dbReference>
<dbReference type="GO" id="GO:0051301">
    <property type="term" value="P:cell division"/>
    <property type="evidence" value="ECO:0007669"/>
    <property type="project" value="UniProtKB-KW"/>
</dbReference>
<dbReference type="GO" id="GO:0061433">
    <property type="term" value="P:cellular response to caloric restriction"/>
    <property type="evidence" value="ECO:0000250"/>
    <property type="project" value="UniProtKB"/>
</dbReference>
<dbReference type="GO" id="GO:0071872">
    <property type="term" value="P:cellular response to epinephrine stimulus"/>
    <property type="evidence" value="ECO:0000250"/>
    <property type="project" value="UniProtKB"/>
</dbReference>
<dbReference type="GO" id="GO:0071456">
    <property type="term" value="P:cellular response to hypoxia"/>
    <property type="evidence" value="ECO:0000250"/>
    <property type="project" value="UniProtKB"/>
</dbReference>
<dbReference type="GO" id="GO:0034599">
    <property type="term" value="P:cellular response to oxidative stress"/>
    <property type="evidence" value="ECO:0000250"/>
    <property type="project" value="UniProtKB"/>
</dbReference>
<dbReference type="GO" id="GO:0040029">
    <property type="term" value="P:epigenetic regulation of gene expression"/>
    <property type="evidence" value="ECO:0000250"/>
    <property type="project" value="UniProtKB"/>
</dbReference>
<dbReference type="GO" id="GO:0016042">
    <property type="term" value="P:lipid catabolic process"/>
    <property type="evidence" value="ECO:0000250"/>
    <property type="project" value="UniProtKB"/>
</dbReference>
<dbReference type="GO" id="GO:0022011">
    <property type="term" value="P:myelination in peripheral nervous system"/>
    <property type="evidence" value="ECO:0000250"/>
    <property type="project" value="UniProtKB"/>
</dbReference>
<dbReference type="GO" id="GO:0010507">
    <property type="term" value="P:negative regulation of autophagy"/>
    <property type="evidence" value="ECO:0000250"/>
    <property type="project" value="UniProtKB"/>
</dbReference>
<dbReference type="GO" id="GO:0045599">
    <property type="term" value="P:negative regulation of fat cell differentiation"/>
    <property type="evidence" value="ECO:0000250"/>
    <property type="project" value="UniProtKB"/>
</dbReference>
<dbReference type="GO" id="GO:0070446">
    <property type="term" value="P:negative regulation of oligodendrocyte progenitor proliferation"/>
    <property type="evidence" value="ECO:0000250"/>
    <property type="project" value="UniProtKB"/>
</dbReference>
<dbReference type="GO" id="GO:0010801">
    <property type="term" value="P:negative regulation of peptidyl-threonine phosphorylation"/>
    <property type="evidence" value="ECO:0000250"/>
    <property type="project" value="UniProtKB"/>
</dbReference>
<dbReference type="GO" id="GO:0042177">
    <property type="term" value="P:negative regulation of protein catabolic process"/>
    <property type="evidence" value="ECO:0000250"/>
    <property type="project" value="UniProtKB"/>
</dbReference>
<dbReference type="GO" id="GO:2000378">
    <property type="term" value="P:negative regulation of reactive oxygen species metabolic process"/>
    <property type="evidence" value="ECO:0000250"/>
    <property type="project" value="UniProtKB"/>
</dbReference>
<dbReference type="GO" id="GO:0000122">
    <property type="term" value="P:negative regulation of transcription by RNA polymerase II"/>
    <property type="evidence" value="ECO:0000250"/>
    <property type="project" value="UniProtKB"/>
</dbReference>
<dbReference type="GO" id="GO:0034983">
    <property type="term" value="P:peptidyl-lysine deacetylation"/>
    <property type="evidence" value="ECO:0000250"/>
    <property type="project" value="UniProtKB"/>
</dbReference>
<dbReference type="GO" id="GO:0051987">
    <property type="term" value="P:positive regulation of attachment of spindle microtubules to kinetochore"/>
    <property type="evidence" value="ECO:0000250"/>
    <property type="project" value="UniProtKB"/>
</dbReference>
<dbReference type="GO" id="GO:0051781">
    <property type="term" value="P:positive regulation of cell division"/>
    <property type="evidence" value="ECO:0000250"/>
    <property type="project" value="UniProtKB"/>
</dbReference>
<dbReference type="GO" id="GO:0043388">
    <property type="term" value="P:positive regulation of DNA binding"/>
    <property type="evidence" value="ECO:0000250"/>
    <property type="project" value="UniProtKB"/>
</dbReference>
<dbReference type="GO" id="GO:1900119">
    <property type="term" value="P:positive regulation of execution phase of apoptosis"/>
    <property type="evidence" value="ECO:0000250"/>
    <property type="project" value="UniProtKB"/>
</dbReference>
<dbReference type="GO" id="GO:0045836">
    <property type="term" value="P:positive regulation of meiotic nuclear division"/>
    <property type="evidence" value="ECO:0000250"/>
    <property type="project" value="UniProtKB"/>
</dbReference>
<dbReference type="GO" id="GO:1900195">
    <property type="term" value="P:positive regulation of oocyte maturation"/>
    <property type="evidence" value="ECO:0000250"/>
    <property type="project" value="UniProtKB"/>
</dbReference>
<dbReference type="GO" id="GO:0032436">
    <property type="term" value="P:positive regulation of proteasomal ubiquitin-dependent protein catabolic process"/>
    <property type="evidence" value="ECO:0000250"/>
    <property type="project" value="UniProtKB"/>
</dbReference>
<dbReference type="GO" id="GO:0045944">
    <property type="term" value="P:positive regulation of transcription by RNA polymerase II"/>
    <property type="evidence" value="ECO:0000250"/>
    <property type="project" value="UniProtKB"/>
</dbReference>
<dbReference type="GO" id="GO:0043161">
    <property type="term" value="P:proteasome-mediated ubiquitin-dependent protein catabolic process"/>
    <property type="evidence" value="ECO:0000250"/>
    <property type="project" value="UniProtKB"/>
</dbReference>
<dbReference type="GO" id="GO:0006476">
    <property type="term" value="P:protein deacetylation"/>
    <property type="evidence" value="ECO:0000250"/>
    <property type="project" value="UniProtKB"/>
</dbReference>
<dbReference type="GO" id="GO:0051726">
    <property type="term" value="P:regulation of cell cycle"/>
    <property type="evidence" value="ECO:0000250"/>
    <property type="project" value="UniProtKB"/>
</dbReference>
<dbReference type="GO" id="GO:0031641">
    <property type="term" value="P:regulation of myelination"/>
    <property type="evidence" value="ECO:0000250"/>
    <property type="project" value="UniProtKB"/>
</dbReference>
<dbReference type="GO" id="GO:0090042">
    <property type="term" value="P:tubulin deacetylation"/>
    <property type="evidence" value="ECO:0000250"/>
    <property type="project" value="UniProtKB"/>
</dbReference>
<dbReference type="CDD" id="cd01408">
    <property type="entry name" value="SIRT1"/>
    <property type="match status" value="1"/>
</dbReference>
<dbReference type="FunFam" id="3.40.50.1220:FF:000005">
    <property type="entry name" value="NAD-dependent deacetylase sirtuin-2"/>
    <property type="match status" value="1"/>
</dbReference>
<dbReference type="FunFam" id="3.30.1600.10:FF:000013">
    <property type="entry name" value="NAD-dependent protein deacetylase sirtuin-1"/>
    <property type="match status" value="1"/>
</dbReference>
<dbReference type="Gene3D" id="3.30.1600.10">
    <property type="entry name" value="SIR2/SIRT2 'Small Domain"/>
    <property type="match status" value="1"/>
</dbReference>
<dbReference type="Gene3D" id="3.40.50.1220">
    <property type="entry name" value="TPP-binding domain"/>
    <property type="match status" value="1"/>
</dbReference>
<dbReference type="InterPro" id="IPR029035">
    <property type="entry name" value="DHS-like_NAD/FAD-binding_dom"/>
</dbReference>
<dbReference type="InterPro" id="IPR050134">
    <property type="entry name" value="NAD-dep_sirtuin_deacylases"/>
</dbReference>
<dbReference type="InterPro" id="IPR003000">
    <property type="entry name" value="Sirtuin"/>
</dbReference>
<dbReference type="InterPro" id="IPR026591">
    <property type="entry name" value="Sirtuin_cat_small_dom_sf"/>
</dbReference>
<dbReference type="InterPro" id="IPR017328">
    <property type="entry name" value="Sirtuin_class_I"/>
</dbReference>
<dbReference type="InterPro" id="IPR026590">
    <property type="entry name" value="Ssirtuin_cat_dom"/>
</dbReference>
<dbReference type="PANTHER" id="PTHR11085:SF6">
    <property type="entry name" value="NAD-DEPENDENT PROTEIN DEACETYLASE SIRTUIN-2"/>
    <property type="match status" value="1"/>
</dbReference>
<dbReference type="PANTHER" id="PTHR11085">
    <property type="entry name" value="NAD-DEPENDENT PROTEIN DEACYLASE SIRTUIN-5, MITOCHONDRIAL-RELATED"/>
    <property type="match status" value="1"/>
</dbReference>
<dbReference type="Pfam" id="PF02146">
    <property type="entry name" value="SIR2"/>
    <property type="match status" value="1"/>
</dbReference>
<dbReference type="PIRSF" id="PIRSF037938">
    <property type="entry name" value="SIR2_euk"/>
    <property type="match status" value="1"/>
</dbReference>
<dbReference type="SUPFAM" id="SSF52467">
    <property type="entry name" value="DHS-like NAD/FAD-binding domain"/>
    <property type="match status" value="1"/>
</dbReference>
<dbReference type="PROSITE" id="PS50305">
    <property type="entry name" value="SIRTUIN"/>
    <property type="match status" value="1"/>
</dbReference>
<sequence>MAEPDPSHPLETQAGKVQEAQDSDSDSEGGAAGGEADMDFLRNLFSQTLSLGSQKERLLDELTLEGVARYMQSERCRRVICLVGAGISTSAGIPDFRSPSTGLYDNLEKYHLPYPEAIFEISYFKKHPEPFFALAKELYPGQFKPTICHYFMRLLKDKGLLLRCYTQNIDTLERIAGLEQEDLVEAHGTFYTSHCVSASCRHEYPLSWMKEKIFSEVTPKCEDCQSLVKPDIVFFGESLPARFFSCMQSDFLKVDLLLVMGTSLQVQPFASLISKAPLSTPRLLINKEKAGQSDPFLGMILGLGGGMDFDSKKAYRDVAWLGDCDQGCLALAELLGWKKELEDLVRREHASIDAQSGAEAPNPSTSASPRKSPPPAQDEARTTEREKPQ</sequence>
<proteinExistence type="evidence at transcript level"/>
<accession>Q4R834</accession>
<comment type="function">
    <text evidence="2 3">NAD-dependent protein deacetylase, which deacetylates internal lysines on histone and alpha-tubulin as well as many other proteins such as key transcription factors. Participates in the modulation of multiple and diverse biological processes such as cell cycle control, genomic integrity, microtubule dynamics, cell differentiation, metabolic networks, and autophagy. Plays a major role in the control of cell cycle progression and genomic stability. Functions in the antephase checkpoint preventing precocious mitotic entry in response to microtubule stress agents, and hence allowing proper inheritance of chromosomes. Positively regulates the anaphase promoting complex/cyclosome (APC/C) ubiquitin ligase complex activity by deacetylating CDC20 and FZR1, then allowing progression through mitosis. Associates both with chromatin at transcriptional start sites (TSSs) and enhancers of active genes. Plays a role in cell cycle and chromatin compaction through epigenetic modulation of the regulation of histone H4 'Lys-20' methylation (H4K20me1) during early mitosis. Specifically deacetylates histone H4 at 'Lys-16' (H4K16ac) between the G2/M transition and metaphase enabling H4K20me1 deposition by KMT5A leading to ulterior levels of H4K20me2 and H4K20me3 deposition throughout cell cycle, and mitotic S-phase progression. Deacetylates KMT5A modulating KMT5A chromatin localization during the mitotic stress response. Also deacetylates histone H3 at 'Lys-57' (H3K56ac) during the mitotic G2/M transition. During oocyte meiosis progression, may deacetylate histone H4 at 'Lys-16' (H4K16ac) and alpha-tubulin, regulating spindle assembly and chromosome alignment by influencing microtubule dynamics and kinetochore function. Deacetylates histone H4 at 'Lys-16' (H4K16ac) at the VEGFA promoter and thereby contributes to regulate expression of VEGFA, a key regulator of angiogenesis. Deacetylates alpha-tubulin at 'Lys-40' and hence controls neuronal motility, oligodendroglial cell arbor projection processes and proliferation of non-neuronal cells. Phosphorylation at Ser-368 by a G1/S-specific cyclin E-CDK2 complex inactivates SIRT2-mediated alpha-tubulin deacetylation, negatively regulating cell adhesion, cell migration and neurite outgrowth during neuronal differentiation. Deacetylates PARD3 and participates in the regulation of Schwann cell peripheral myelination formation during early postnatal development and during postinjury remyelination. Involved in several cellular metabolic pathways. Plays a role in the regulation of blood glucose homeostasis by deacetylating and stabilizing phosphoenolpyruvate carboxykinase PCK1 activity in response to low nutrient availability. Acts as a key regulator in the pentose phosphate pathway (PPP) by deacetylating and activating the glucose-6-phosphate G6PD enzyme, and therefore, stimulates the production of cytosolic NADPH to counteract oxidative damage. Maintains energy homeostasis in response to nutrient deprivation as well as energy expenditure by inhibiting adipogenesis and promoting lipolysis. Attenuates adipocyte differentiation by deacetylating and promoting FOXO1 interaction to PPARG and subsequent repression of PPARG-dependent transcriptional activity. Plays a role in the regulation of lysosome-mediated degradation of protein aggregates by autophagy in neuronal cells. Deacetylates FOXO1 in response to oxidative stress or serum deprivation, thereby negatively regulating FOXO1-mediated autophagy (By similarity). Deacetylates a broad range of transcription factors and co-regulators regulating target gene expression. Deacetylates transcriptional factor FOXO3 stimulating the ubiquitin ligase SCF(SKP2)-mediated FOXO3 ubiquitination and degradation (By similarity). Deacetylates HIF1A and therefore promotes HIF1A degradation and inhibition of HIF1A transcriptional activity in tumor cells in response to hypoxia. Deacetylates RELA in the cytoplasm inhibiting NF-kappaB-dependent transcription activation upon TNF-alpha stimulation. Inhibits transcriptional activation by deacetylating p53/TP53 and EP300. Also deacetylates EIF5A. Functions as a negative regulator on oxidative stress-tolerance in response to anoxia-reoxygenation conditions. Plays a role as tumor suppressor (By similarity). In addition to protein deacetylase activity, also has activity toward long-chain fatty acyl groups and mediates protein-lysine demyristoylation and depalmitoylation of target proteins, such as ARF6 and KRAS, thereby regulating their association with membranes (By similarity).</text>
</comment>
<comment type="catalytic activity">
    <reaction evidence="4">
        <text>N(6)-acetyl-L-lysyl-[protein] + NAD(+) + H2O = 2''-O-acetyl-ADP-D-ribose + nicotinamide + L-lysyl-[protein]</text>
        <dbReference type="Rhea" id="RHEA:43636"/>
        <dbReference type="Rhea" id="RHEA-COMP:9752"/>
        <dbReference type="Rhea" id="RHEA-COMP:10731"/>
        <dbReference type="ChEBI" id="CHEBI:15377"/>
        <dbReference type="ChEBI" id="CHEBI:17154"/>
        <dbReference type="ChEBI" id="CHEBI:29969"/>
        <dbReference type="ChEBI" id="CHEBI:57540"/>
        <dbReference type="ChEBI" id="CHEBI:61930"/>
        <dbReference type="ChEBI" id="CHEBI:83767"/>
        <dbReference type="EC" id="2.3.1.286"/>
    </reaction>
</comment>
<comment type="catalytic activity">
    <reaction evidence="2">
        <text>N(6)-tetradecanoyl-L-lysyl-[protein] + NAD(+) + H2O = 2''-O-tetradecanoyl-ADP-D-ribose + nicotinamide + L-lysyl-[protein]</text>
        <dbReference type="Rhea" id="RHEA:70567"/>
        <dbReference type="Rhea" id="RHEA-COMP:9752"/>
        <dbReference type="Rhea" id="RHEA-COMP:15437"/>
        <dbReference type="ChEBI" id="CHEBI:15377"/>
        <dbReference type="ChEBI" id="CHEBI:17154"/>
        <dbReference type="ChEBI" id="CHEBI:29969"/>
        <dbReference type="ChEBI" id="CHEBI:57540"/>
        <dbReference type="ChEBI" id="CHEBI:141129"/>
        <dbReference type="ChEBI" id="CHEBI:189674"/>
    </reaction>
    <physiologicalReaction direction="left-to-right" evidence="2">
        <dbReference type="Rhea" id="RHEA:70568"/>
    </physiologicalReaction>
</comment>
<comment type="catalytic activity">
    <reaction evidence="2">
        <text>N(6)-hexadecanoyl-L-lysyl-[protein] + NAD(+) + H2O = 2''-O-hexadecanoyl-ADP-D-ribose + nicotinamide + L-lysyl-[protein]</text>
        <dbReference type="Rhea" id="RHEA:70563"/>
        <dbReference type="Rhea" id="RHEA-COMP:9752"/>
        <dbReference type="Rhea" id="RHEA-COMP:14175"/>
        <dbReference type="ChEBI" id="CHEBI:15377"/>
        <dbReference type="ChEBI" id="CHEBI:17154"/>
        <dbReference type="ChEBI" id="CHEBI:29969"/>
        <dbReference type="ChEBI" id="CHEBI:57540"/>
        <dbReference type="ChEBI" id="CHEBI:138936"/>
        <dbReference type="ChEBI" id="CHEBI:189673"/>
    </reaction>
    <physiologicalReaction direction="left-to-right" evidence="2">
        <dbReference type="Rhea" id="RHEA:70564"/>
    </physiologicalReaction>
</comment>
<comment type="cofactor">
    <cofactor evidence="2">
        <name>Zn(2+)</name>
        <dbReference type="ChEBI" id="CHEBI:29105"/>
    </cofactor>
    <text evidence="2">Binds 1 zinc ion per subunit.</text>
</comment>
<comment type="activity regulation">
    <text evidence="2">Inhibited by Sirtinol, A3 and M15 small molecules. Inhibited by nicotinamide (By similarity).</text>
</comment>
<comment type="subunit">
    <text evidence="2 3">Interacts with CDC20, FOXO3 and FZR1 (By similarity). Associates with microtubules in primary cortical mature neurons (By similarity). Homotrimer. Interacts (via both phosphorylated, unphosphorylated, active or inactive forms) with HDAC6; the interaction is necessary for the complex to interact with alpha-tubulin, suggesting that these proteins belong to a large complex that deacetylates the cytoskeleton. Interacts with FOXO1; the interaction is disrupted upon serum-starvation or oxidative stress, leading to increased level of acetylated FOXO1 and induction of autophagy (By similarity). Interacts with RELA; the interaction occurs in the cytoplasm and is increased in a TNF-alpha-dependent manner. Interacts with HOXA10; the interaction is direct. Interacts with YWHAB and YWHAG; the interactions occur in a AKT-dependent manner and increase SIRT2-dependent TP53 deacetylation. Interacts with MAPK1/ERK2 and MAPK3/ERK1; the interactions increase SIRT2 stability and deacetylation activity. Interacts (phosphorylated form) with KMT5A isoform 2; the interaction is direct, stimulates KMT5A-mediated methyltransferase activity on histone at 'Lys-20' (H4K20me1) and is increased in a H(2)O(2)-induced oxidative stress-dependent manner. Interacts with G6PD; the interaction is enhanced by H(2)O(2) treatment. Interacts with a G1/S-specific cyclin E-CDK2 complex. Interacts with AURKA, CDK5R1 (p35 form) and CDK5 and HIF1A. Interacts with the tRNA ligase SARS1; recruited to the VEGFA promoter via interaction with SARS1 (By similarity). Interacts with BEX4; negatively regulates alpha-tubulin deacetylation by SIRT2 (By similarity).</text>
</comment>
<comment type="subcellular location">
    <subcellularLocation>
        <location evidence="2">Nucleus</location>
    </subcellularLocation>
    <subcellularLocation>
        <location evidence="3">Cytoplasm</location>
        <location evidence="3">Perinuclear region</location>
    </subcellularLocation>
    <subcellularLocation>
        <location evidence="2">Cytoplasm</location>
    </subcellularLocation>
    <subcellularLocation>
        <location evidence="2">Cytoplasm</location>
        <location evidence="2">Cytoskeleton</location>
    </subcellularLocation>
    <subcellularLocation>
        <location evidence="2">Cytoplasm</location>
        <location evidence="2">Cytoskeleton</location>
        <location evidence="2">Microtubule organizing center</location>
        <location evidence="2">Centrosome</location>
    </subcellularLocation>
    <subcellularLocation>
        <location evidence="2">Cytoplasm</location>
        <location evidence="2">Cytoskeleton</location>
        <location evidence="2">Microtubule organizing center</location>
        <location evidence="2">Centrosome</location>
        <location evidence="2">Centriole</location>
    </subcellularLocation>
    <subcellularLocation>
        <location evidence="2">Cytoplasm</location>
        <location evidence="2">Cytoskeleton</location>
        <location evidence="2">Spindle</location>
    </subcellularLocation>
    <subcellularLocation>
        <location evidence="2">Midbody</location>
    </subcellularLocation>
    <subcellularLocation>
        <location evidence="2">Chromosome</location>
    </subcellularLocation>
    <subcellularLocation>
        <location evidence="3">Perikaryon</location>
    </subcellularLocation>
    <subcellularLocation>
        <location evidence="3">Cell projection</location>
    </subcellularLocation>
    <subcellularLocation>
        <location evidence="3">Cell projection</location>
        <location evidence="3">Growth cone</location>
    </subcellularLocation>
    <subcellularLocation>
        <location evidence="3">Myelin membrane</location>
    </subcellularLocation>
    <text evidence="2 3">Localizes in the cytoplasm during most of the cell cycle except in the G2/M transition and during mitosis, where it is localized in association with chromatin and induces deacetylation of histone at 'Lys-16' (H4K16ac). Colocalizes with KMT5A at mitotic foci. Colocalizes with CDK1 at centrosome during prophase and splindle fibers during metaphase. Colocalizes with Aurora kinase AURKA at centrosome during early prophase and in the centrioles and growing mitotic spindle throughout metaphase. Colocalizes with Aurora kinase AURKB during cytokinesis with the midbody. Colocalizes with microtubules (By similarity). Detected in perinuclear foci that may be aggresomes containing misfolded, ubiquitinated proteins (By similarity). Shuttles between the cytoplasm and the nucleus through the CRM1 export pathway. Colocalizes with EP300 in the nucleus. Translocates to the nucleus and chromatin upon bacterium Listeria monocytogenes infection in interphase cells (By similarity). Deacetylates FOXO3 in the cytoplasm. Colocalizes with PLP1 in internodal regions, at paranodal axoglial junction and Schmidt-Lanterman incisures of myelin sheat. Colocalizes with CDK5R1 in the perikaryon, neurites and growth cone of hippocampal neurons. Colocalizes with alpha-tubulin in neuronal growth cone. Localizes in the cytoplasm and nucleus of germinal vesicle (GV) stage oocytes. Colocalizes with alpha-tubulin on the meiotic spindle as the oocytes enter into metaphase, and also during meiotic anaphase and telophase, especially with the midbody. Colocalizes with PARD3 in internodal region of axons (By similarity). Colocalizes with acetylated alpha-tubulin in cell projection processes during primary oligodendrocyte precursor (OLP) differentiation (By similarity).</text>
</comment>
<comment type="PTM">
    <text evidence="2">Phosphorylated at phosphoserine and phosphothreonine. Phosphorylated at Ser-368 by a mitotic kinase CDK1/cyclin B at the G2/M transition; phosphorylation regulates the delay in cell-cycle progression. Phosphorylated at Ser-368 by a mitotic kinase G1/S-specific cyclin E/Cdk2 complex; phosphorylation inactivates SIRT2-mediated alpha-tubulin deacetylation and thereby negatively regulates cell adhesion, cell migration and neurite outgrowth during neuronal differentiation. Phosphorylated by cyclin A/Cdk2 and p35-Cdk5 complexes and to a lesser extent by the cyclin D3/Cdk4 and cyclin B/Cdk1, in vitro. Dephosphorylated at Ser-368 by CDC14A and CDC14B around early anaphase (By similarity).</text>
</comment>
<comment type="PTM">
    <text evidence="2">Acetylated by EP300; acetylation leads both to the decreased of SIRT2-mediated alpha-tubulin deacetylase activity and SIRT2-mediated down-regulation of TP53 transcriptional activity.</text>
</comment>
<comment type="PTM">
    <text evidence="2">Ubiquitinated.</text>
</comment>
<comment type="similarity">
    <text evidence="6">Belongs to the sirtuin family. Class I subfamily.</text>
</comment>
<protein>
    <recommendedName>
        <fullName>NAD-dependent protein deacetylase sirtuin-2</fullName>
        <ecNumber evidence="2 4">2.3.1.286</ecNumber>
    </recommendedName>
    <alternativeName>
        <fullName evidence="6">NAD-dependent protein defatty-acylase sirtuin-2</fullName>
        <ecNumber evidence="2">2.3.1.-</ecNumber>
    </alternativeName>
    <alternativeName>
        <fullName>Regulatory protein SIR2 homolog 2</fullName>
    </alternativeName>
    <alternativeName>
        <fullName>SIR2-like protein 2</fullName>
    </alternativeName>
</protein>
<name>SIR2_MACFA</name>
<reference key="1">
    <citation type="submission" date="2005-06" db="EMBL/GenBank/DDBJ databases">
        <title>DNA sequences of macaque genes expressed in brain or testis and its evolutionary implications.</title>
        <authorList>
            <consortium name="International consortium for macaque cDNA sequencing and analysis"/>
        </authorList>
    </citation>
    <scope>NUCLEOTIDE SEQUENCE [LARGE SCALE MRNA]</scope>
    <source>
        <tissue>Testis</tissue>
    </source>
</reference>